<keyword id="KW-0010">Activator</keyword>
<keyword id="KW-0217">Developmental protein</keyword>
<keyword id="KW-0238">DNA-binding</keyword>
<keyword id="KW-1017">Isopeptide bond</keyword>
<keyword id="KW-0479">Metal-binding</keyword>
<keyword id="KW-0539">Nucleus</keyword>
<keyword id="KW-1185">Reference proteome</keyword>
<keyword id="KW-0677">Repeat</keyword>
<keyword id="KW-0804">Transcription</keyword>
<keyword id="KW-0805">Transcription regulation</keyword>
<keyword id="KW-0832">Ubl conjugation</keyword>
<keyword id="KW-0862">Zinc</keyword>
<keyword id="KW-0863">Zinc-finger</keyword>
<feature type="chain" id="PRO_0000047239" description="Zinc finger protein 354A">
    <location>
        <begin position="1"/>
        <end position="572"/>
    </location>
</feature>
<feature type="domain" description="KRAB" evidence="4">
    <location>
        <begin position="14"/>
        <end position="85"/>
    </location>
</feature>
<feature type="zinc finger region" description="C2H2-type 1" evidence="3">
    <location>
        <begin position="184"/>
        <end position="206"/>
    </location>
</feature>
<feature type="zinc finger region" description="C2H2-type 2" evidence="3">
    <location>
        <begin position="212"/>
        <end position="234"/>
    </location>
</feature>
<feature type="zinc finger region" description="C2H2-type 3" evidence="3">
    <location>
        <begin position="240"/>
        <end position="262"/>
    </location>
</feature>
<feature type="zinc finger region" description="C2H2-type 4" evidence="3">
    <location>
        <begin position="268"/>
        <end position="290"/>
    </location>
</feature>
<feature type="zinc finger region" description="C2H2-type 5" evidence="3">
    <location>
        <begin position="321"/>
        <end position="343"/>
    </location>
</feature>
<feature type="zinc finger region" description="C2H2-type 6" evidence="3">
    <location>
        <begin position="349"/>
        <end position="371"/>
    </location>
</feature>
<feature type="zinc finger region" description="C2H2-type 7" evidence="3">
    <location>
        <begin position="377"/>
        <end position="399"/>
    </location>
</feature>
<feature type="zinc finger region" description="C2H2-type 8" evidence="3">
    <location>
        <begin position="405"/>
        <end position="427"/>
    </location>
</feature>
<feature type="zinc finger region" description="C2H2-type 9" evidence="3">
    <location>
        <begin position="431"/>
        <end position="455"/>
    </location>
</feature>
<feature type="zinc finger region" description="C2H2-type 10" evidence="3">
    <location>
        <begin position="461"/>
        <end position="483"/>
    </location>
</feature>
<feature type="zinc finger region" description="C2H2-type 11" evidence="3">
    <location>
        <begin position="489"/>
        <end position="511"/>
    </location>
</feature>
<feature type="zinc finger region" description="C2H2-type 12" evidence="3">
    <location>
        <begin position="517"/>
        <end position="539"/>
    </location>
</feature>
<feature type="zinc finger region" description="C2H2-type 13" evidence="3">
    <location>
        <begin position="545"/>
        <end position="567"/>
    </location>
</feature>
<feature type="cross-link" description="Glycyl lysine isopeptide (Lys-Gly) (interchain with G-Cter in SUMO2)" evidence="1">
    <location>
        <position position="121"/>
    </location>
</feature>
<feature type="cross-link" description="Glycyl lysine isopeptide (Lys-Gly) (interchain with G-Cter in SUMO2)" evidence="1">
    <location>
        <position position="155"/>
    </location>
</feature>
<feature type="cross-link" description="Glycyl lysine isopeptide (Lys-Gly) (interchain with G-Cter in SUMO2)" evidence="1">
    <location>
        <position position="238"/>
    </location>
</feature>
<feature type="sequence conflict" description="In Ref. 1; AAA96309." evidence="7" ref="1">
    <original>G</original>
    <variation>D</variation>
    <location>
        <position position="82"/>
    </location>
</feature>
<evidence type="ECO:0000250" key="1">
    <source>
        <dbReference type="UniProtKB" id="O60765"/>
    </source>
</evidence>
<evidence type="ECO:0000250" key="2">
    <source>
        <dbReference type="UniProtKB" id="Q02975"/>
    </source>
</evidence>
<evidence type="ECO:0000255" key="3">
    <source>
        <dbReference type="PROSITE-ProRule" id="PRU00042"/>
    </source>
</evidence>
<evidence type="ECO:0000255" key="4">
    <source>
        <dbReference type="PROSITE-ProRule" id="PRU00119"/>
    </source>
</evidence>
<evidence type="ECO:0000269" key="5">
    <source>
    </source>
</evidence>
<evidence type="ECO:0000303" key="6">
    <source>
    </source>
</evidence>
<evidence type="ECO:0000305" key="7"/>
<accession>Q61751</accession>
<accession>Q9QXU0</accession>
<name>Z354A_MOUSE</name>
<protein>
    <recommendedName>
        <fullName>Zinc finger protein 354A</fullName>
    </recommendedName>
    <alternativeName>
        <fullName evidence="6">Kidney, ischemia, and developmentally-regulated protein 1</fullName>
    </alternativeName>
    <alternativeName>
        <fullName evidence="6">Renal transcription factor Kid-1</fullName>
    </alternativeName>
    <alternativeName>
        <fullName>Transcription factor 17</fullName>
        <shortName>TCF-17</shortName>
    </alternativeName>
</protein>
<dbReference type="EMBL" id="L77247">
    <property type="protein sequence ID" value="AAA96309.1"/>
    <property type="molecule type" value="mRNA"/>
</dbReference>
<dbReference type="EMBL" id="AF184111">
    <property type="protein sequence ID" value="AAF01033.1"/>
    <property type="molecule type" value="mRNA"/>
</dbReference>
<dbReference type="EMBL" id="AL645962">
    <property type="status" value="NOT_ANNOTATED_CDS"/>
    <property type="molecule type" value="Genomic_DNA"/>
</dbReference>
<dbReference type="EMBL" id="CH466575">
    <property type="protein sequence ID" value="EDL33680.1"/>
    <property type="molecule type" value="Genomic_DNA"/>
</dbReference>
<dbReference type="EMBL" id="BC050843">
    <property type="protein sequence ID" value="AAH50843.1"/>
    <property type="molecule type" value="mRNA"/>
</dbReference>
<dbReference type="CCDS" id="CCDS24648.1"/>
<dbReference type="RefSeq" id="NP_001313495.1">
    <property type="nucleotide sequence ID" value="NM_001326566.1"/>
</dbReference>
<dbReference type="RefSeq" id="NP_033355.2">
    <property type="nucleotide sequence ID" value="NM_009329.4"/>
</dbReference>
<dbReference type="RefSeq" id="XP_006532853.1">
    <property type="nucleotide sequence ID" value="XM_006532790.1"/>
</dbReference>
<dbReference type="SMR" id="Q61751"/>
<dbReference type="BioGRID" id="204002">
    <property type="interactions" value="3"/>
</dbReference>
<dbReference type="FunCoup" id="Q61751">
    <property type="interactions" value="34"/>
</dbReference>
<dbReference type="IntAct" id="Q61751">
    <property type="interactions" value="2"/>
</dbReference>
<dbReference type="STRING" id="10090.ENSMUSP00000104747"/>
<dbReference type="iPTMnet" id="Q61751"/>
<dbReference type="PhosphoSitePlus" id="Q61751"/>
<dbReference type="jPOST" id="Q61751"/>
<dbReference type="PaxDb" id="10090-ENSMUSP00000104747"/>
<dbReference type="ProteomicsDB" id="275258"/>
<dbReference type="Antibodypedia" id="17609">
    <property type="antibodies" value="65 antibodies from 24 providers"/>
</dbReference>
<dbReference type="DNASU" id="21408"/>
<dbReference type="Ensembl" id="ENSMUST00000020628.6">
    <property type="protein sequence ID" value="ENSMUSP00000020628.6"/>
    <property type="gene ID" value="ENSMUSG00000020364.15"/>
</dbReference>
<dbReference type="Ensembl" id="ENSMUST00000102766.10">
    <property type="protein sequence ID" value="ENSMUSP00000099827.4"/>
    <property type="gene ID" value="ENSMUSG00000020364.15"/>
</dbReference>
<dbReference type="GeneID" id="21408"/>
<dbReference type="KEGG" id="mmu:21408"/>
<dbReference type="UCSC" id="uc007itl.1">
    <property type="organism name" value="mouse"/>
</dbReference>
<dbReference type="AGR" id="MGI:103172"/>
<dbReference type="CTD" id="21408"/>
<dbReference type="MGI" id="MGI:103172">
    <property type="gene designation" value="Zfp354a"/>
</dbReference>
<dbReference type="VEuPathDB" id="HostDB:ENSMUSG00000020364"/>
<dbReference type="eggNOG" id="KOG1721">
    <property type="taxonomic scope" value="Eukaryota"/>
</dbReference>
<dbReference type="GeneTree" id="ENSGT00940000161487"/>
<dbReference type="HOGENOM" id="CLU_002678_44_5_1"/>
<dbReference type="InParanoid" id="Q61751"/>
<dbReference type="OMA" id="KPCIYEY"/>
<dbReference type="OrthoDB" id="8117402at2759"/>
<dbReference type="Reactome" id="R-MMU-212436">
    <property type="pathway name" value="Generic Transcription Pathway"/>
</dbReference>
<dbReference type="Reactome" id="R-MMU-9843940">
    <property type="pathway name" value="Regulation of endogenous retroelements by KRAB-ZFP proteins"/>
</dbReference>
<dbReference type="BioGRID-ORCS" id="21408">
    <property type="hits" value="3 hits in 76 CRISPR screens"/>
</dbReference>
<dbReference type="ChiTaRS" id="Pim3">
    <property type="organism name" value="mouse"/>
</dbReference>
<dbReference type="PRO" id="PR:Q61751"/>
<dbReference type="Proteomes" id="UP000000589">
    <property type="component" value="Chromosome 11"/>
</dbReference>
<dbReference type="RNAct" id="Q61751">
    <property type="molecule type" value="protein"/>
</dbReference>
<dbReference type="Bgee" id="ENSMUSG00000020364">
    <property type="expression patterns" value="Expressed in embryonic post-anal tail and 154 other cell types or tissues"/>
</dbReference>
<dbReference type="ExpressionAtlas" id="Q61751">
    <property type="expression patterns" value="baseline and differential"/>
</dbReference>
<dbReference type="GO" id="GO:0005634">
    <property type="term" value="C:nucleus"/>
    <property type="evidence" value="ECO:0000250"/>
    <property type="project" value="UniProtKB"/>
</dbReference>
<dbReference type="GO" id="GO:0003677">
    <property type="term" value="F:DNA binding"/>
    <property type="evidence" value="ECO:0007669"/>
    <property type="project" value="UniProtKB-KW"/>
</dbReference>
<dbReference type="GO" id="GO:0008270">
    <property type="term" value="F:zinc ion binding"/>
    <property type="evidence" value="ECO:0007669"/>
    <property type="project" value="UniProtKB-KW"/>
</dbReference>
<dbReference type="GO" id="GO:0006355">
    <property type="term" value="P:regulation of DNA-templated transcription"/>
    <property type="evidence" value="ECO:0007669"/>
    <property type="project" value="InterPro"/>
</dbReference>
<dbReference type="CDD" id="cd07765">
    <property type="entry name" value="KRAB_A-box"/>
    <property type="match status" value="1"/>
</dbReference>
<dbReference type="FunFam" id="3.30.160.60:FF:000005">
    <property type="entry name" value="Zinc finger protein 14 homolog"/>
    <property type="match status" value="1"/>
</dbReference>
<dbReference type="FunFam" id="3.30.160.60:FF:002343">
    <property type="entry name" value="Zinc finger protein 33A"/>
    <property type="match status" value="2"/>
</dbReference>
<dbReference type="FunFam" id="3.30.160.60:FF:000387">
    <property type="entry name" value="Zinc finger protein 354A"/>
    <property type="match status" value="2"/>
</dbReference>
<dbReference type="FunFam" id="3.30.160.60:FF:001586">
    <property type="entry name" value="Zinc finger protein 354B"/>
    <property type="match status" value="1"/>
</dbReference>
<dbReference type="FunFam" id="3.30.160.60:FF:002145">
    <property type="entry name" value="Zinc finger protein 354B"/>
    <property type="match status" value="1"/>
</dbReference>
<dbReference type="FunFam" id="3.30.160.60:FF:000016">
    <property type="entry name" value="zinc finger protein 37 homolog"/>
    <property type="match status" value="1"/>
</dbReference>
<dbReference type="FunFam" id="3.30.160.60:FF:001004">
    <property type="entry name" value="Zinc finger protein 426"/>
    <property type="match status" value="1"/>
</dbReference>
<dbReference type="FunFam" id="3.30.160.60:FF:000011">
    <property type="entry name" value="zinc finger protein 615 isoform X1"/>
    <property type="match status" value="2"/>
</dbReference>
<dbReference type="FunFam" id="3.30.160.60:FF:000416">
    <property type="entry name" value="zinc finger protein 879 isoform X1"/>
    <property type="match status" value="1"/>
</dbReference>
<dbReference type="FunFam" id="3.30.160.60:FF:000485">
    <property type="entry name" value="Zinc finger protein 90 homolog"/>
    <property type="match status" value="1"/>
</dbReference>
<dbReference type="Gene3D" id="6.10.140.140">
    <property type="match status" value="1"/>
</dbReference>
<dbReference type="Gene3D" id="3.30.160.60">
    <property type="entry name" value="Classic Zinc Finger"/>
    <property type="match status" value="13"/>
</dbReference>
<dbReference type="InterPro" id="IPR001909">
    <property type="entry name" value="KRAB"/>
</dbReference>
<dbReference type="InterPro" id="IPR036051">
    <property type="entry name" value="KRAB_dom_sf"/>
</dbReference>
<dbReference type="InterPro" id="IPR036236">
    <property type="entry name" value="Znf_C2H2_sf"/>
</dbReference>
<dbReference type="InterPro" id="IPR013087">
    <property type="entry name" value="Znf_C2H2_type"/>
</dbReference>
<dbReference type="PANTHER" id="PTHR24399:SF54">
    <property type="entry name" value="GASTRULA ZINC FINGER PROTEIN XLCGF26.1-LIKE-RELATED"/>
    <property type="match status" value="1"/>
</dbReference>
<dbReference type="PANTHER" id="PTHR24399">
    <property type="entry name" value="ZINC FINGER AND BTB DOMAIN-CONTAINING"/>
    <property type="match status" value="1"/>
</dbReference>
<dbReference type="Pfam" id="PF01352">
    <property type="entry name" value="KRAB"/>
    <property type="match status" value="1"/>
</dbReference>
<dbReference type="Pfam" id="PF00096">
    <property type="entry name" value="zf-C2H2"/>
    <property type="match status" value="13"/>
</dbReference>
<dbReference type="SMART" id="SM00349">
    <property type="entry name" value="KRAB"/>
    <property type="match status" value="1"/>
</dbReference>
<dbReference type="SMART" id="SM00355">
    <property type="entry name" value="ZnF_C2H2"/>
    <property type="match status" value="13"/>
</dbReference>
<dbReference type="SUPFAM" id="SSF57667">
    <property type="entry name" value="beta-beta-alpha zinc fingers"/>
    <property type="match status" value="8"/>
</dbReference>
<dbReference type="SUPFAM" id="SSF109640">
    <property type="entry name" value="KRAB domain (Kruppel-associated box)"/>
    <property type="match status" value="1"/>
</dbReference>
<dbReference type="PROSITE" id="PS50805">
    <property type="entry name" value="KRAB"/>
    <property type="match status" value="1"/>
</dbReference>
<dbReference type="PROSITE" id="PS00028">
    <property type="entry name" value="ZINC_FINGER_C2H2_1"/>
    <property type="match status" value="13"/>
</dbReference>
<dbReference type="PROSITE" id="PS50157">
    <property type="entry name" value="ZINC_FINGER_C2H2_2"/>
    <property type="match status" value="13"/>
</dbReference>
<gene>
    <name type="primary">Znf354a</name>
    <name evidence="6" type="synonym">Kid1</name>
    <name type="synonym">Tcf17</name>
    <name type="synonym">Zfp354a</name>
</gene>
<organism>
    <name type="scientific">Mus musculus</name>
    <name type="common">Mouse</name>
    <dbReference type="NCBI Taxonomy" id="10090"/>
    <lineage>
        <taxon>Eukaryota</taxon>
        <taxon>Metazoa</taxon>
        <taxon>Chordata</taxon>
        <taxon>Craniata</taxon>
        <taxon>Vertebrata</taxon>
        <taxon>Euteleostomi</taxon>
        <taxon>Mammalia</taxon>
        <taxon>Eutheria</taxon>
        <taxon>Euarchontoglires</taxon>
        <taxon>Glires</taxon>
        <taxon>Rodentia</taxon>
        <taxon>Myomorpha</taxon>
        <taxon>Muroidea</taxon>
        <taxon>Muridae</taxon>
        <taxon>Murinae</taxon>
        <taxon>Mus</taxon>
        <taxon>Mus</taxon>
    </lineage>
</organism>
<comment type="function">
    <text evidence="2">It may play a role in renal development and may also be involved in the repair of the kidney after ischemia-reperfusion or folic acid administration.</text>
</comment>
<comment type="subcellular location">
    <subcellularLocation>
        <location evidence="2">Nucleus</location>
    </subcellularLocation>
</comment>
<comment type="tissue specificity">
    <text evidence="5">Highly expressed in eye and kidney. Detected at high levels in adult brain and kidney, and at lower levels in adult liver, lung, skeletal muscle, heart, salivary gland, testis and tongue. Detected in embryonic brain, heart, lung,kidney and gut.</text>
</comment>
<comment type="similarity">
    <text evidence="7">Belongs to the krueppel C2H2-type zinc-finger protein family.</text>
</comment>
<proteinExistence type="evidence at transcript level"/>
<reference key="1">
    <citation type="journal article" date="1997" name="Exp. Eye Res.">
        <title>The transcription factor, Kid-1, is highly expressed in both eye and kidney of the mouse.</title>
        <authorList>
            <person name="Brady J.P."/>
            <person name="Duncan M.K."/>
            <person name="Wawrousek E.F."/>
            <person name="Piatigorsky J."/>
        </authorList>
    </citation>
    <scope>NUCLEOTIDE SEQUENCE [MRNA]</scope>
    <source>
        <tissue>Lens</tissue>
    </source>
</reference>
<reference key="2">
    <citation type="journal article" date="1999" name="Gene">
        <title>Characterization of the mouse Kid1 gene and identification of a highly related gene, Kid2.</title>
        <authorList>
            <person name="Tekki-Kessaris N."/>
            <person name="Bonventre J.V."/>
            <person name="Boulter C.A."/>
        </authorList>
    </citation>
    <scope>NUCLEOTIDE SEQUENCE [MRNA]</scope>
    <scope>TISSUE SPECIFICITY</scope>
    <source>
        <strain>129/Sv</strain>
    </source>
</reference>
<reference key="3">
    <citation type="journal article" date="2009" name="PLoS Biol.">
        <title>Lineage-specific biology revealed by a finished genome assembly of the mouse.</title>
        <authorList>
            <person name="Church D.M."/>
            <person name="Goodstadt L."/>
            <person name="Hillier L.W."/>
            <person name="Zody M.C."/>
            <person name="Goldstein S."/>
            <person name="She X."/>
            <person name="Bult C.J."/>
            <person name="Agarwala R."/>
            <person name="Cherry J.L."/>
            <person name="DiCuccio M."/>
            <person name="Hlavina W."/>
            <person name="Kapustin Y."/>
            <person name="Meric P."/>
            <person name="Maglott D."/>
            <person name="Birtle Z."/>
            <person name="Marques A.C."/>
            <person name="Graves T."/>
            <person name="Zhou S."/>
            <person name="Teague B."/>
            <person name="Potamousis K."/>
            <person name="Churas C."/>
            <person name="Place M."/>
            <person name="Herschleb J."/>
            <person name="Runnheim R."/>
            <person name="Forrest D."/>
            <person name="Amos-Landgraf J."/>
            <person name="Schwartz D.C."/>
            <person name="Cheng Z."/>
            <person name="Lindblad-Toh K."/>
            <person name="Eichler E.E."/>
            <person name="Ponting C.P."/>
        </authorList>
    </citation>
    <scope>NUCLEOTIDE SEQUENCE [LARGE SCALE GENOMIC DNA]</scope>
    <source>
        <strain>C57BL/6J</strain>
    </source>
</reference>
<reference key="4">
    <citation type="submission" date="2005-07" db="EMBL/GenBank/DDBJ databases">
        <authorList>
            <person name="Mural R.J."/>
            <person name="Adams M.D."/>
            <person name="Myers E.W."/>
            <person name="Smith H.O."/>
            <person name="Venter J.C."/>
        </authorList>
    </citation>
    <scope>NUCLEOTIDE SEQUENCE [LARGE SCALE GENOMIC DNA]</scope>
</reference>
<reference key="5">
    <citation type="journal article" date="2004" name="Genome Res.">
        <title>The status, quality, and expansion of the NIH full-length cDNA project: the Mammalian Gene Collection (MGC).</title>
        <authorList>
            <consortium name="The MGC Project Team"/>
        </authorList>
    </citation>
    <scope>NUCLEOTIDE SEQUENCE [LARGE SCALE MRNA]</scope>
    <source>
        <tissue>Limb</tissue>
    </source>
</reference>
<sequence>MAPEQWEATSQVSLTFEDVAVLFTRDEWKKLVPSQRSLYREVMLENYSNLASLGFPFTKPKVISLLQQGEDPWKVEEEGPGGFSLGLKCSQRTTKSTQTQDSSFRELIMRKSKRKEPWNMKSENLSIHEGKLEEKWDVNASTIERSYKSNELSPKSHREKRSSECEKQISYLSNPLGITPDKRYKCSMCEKTFINTSSLRKHEKNHSGEKLFKCKECSKAFSQSSALIQHQITHTGEKPYVCKECGKAFTLSTSLYKHLRTHTVEKSYRCKECGKSFGRRSGLFIHQKVHAGENPYKYNPGRKASTSLSGCQRIHSRKKTYLCNECGNTFKSSSSLRYHQRIHTGEKPFKCSECGRAFSQSASLIQHERIHTGEKPYRCSECGKGFTSISRLNRHRIIHTGEKFYNCNECGKALSSHSTLIIHERIHTGEKPCKCKVCGKAFRQSSALIQHQRMHTGERPYKCNECGKTFRCNSSLSNHQRTHTGEKPYRCQECGMSFGQSSALIQHRRIHTGEKPFKCNTCGKTFRQSSSRIAHQRIHTGEKPYECNTCGKLFNHRSSLTNHYKIHVDEDP</sequence>